<accession>B0VMC8</accession>
<proteinExistence type="inferred from homology"/>
<protein>
    <recommendedName>
        <fullName evidence="1">Probable Fe(2+)-trafficking protein</fullName>
    </recommendedName>
</protein>
<gene>
    <name type="ordered locus">ABSDF3272</name>
</gene>
<dbReference type="EMBL" id="CU468230">
    <property type="protein sequence ID" value="CAP02542.1"/>
    <property type="molecule type" value="Genomic_DNA"/>
</dbReference>
<dbReference type="SMR" id="B0VMC8"/>
<dbReference type="KEGG" id="abm:ABSDF3272"/>
<dbReference type="HOGENOM" id="CLU_170994_0_0_6"/>
<dbReference type="BioCyc" id="ABAU509170:GCL9-2709-MONOMER"/>
<dbReference type="Proteomes" id="UP000001741">
    <property type="component" value="Chromosome"/>
</dbReference>
<dbReference type="GO" id="GO:0005829">
    <property type="term" value="C:cytosol"/>
    <property type="evidence" value="ECO:0007669"/>
    <property type="project" value="TreeGrafter"/>
</dbReference>
<dbReference type="GO" id="GO:0005506">
    <property type="term" value="F:iron ion binding"/>
    <property type="evidence" value="ECO:0007669"/>
    <property type="project" value="UniProtKB-UniRule"/>
</dbReference>
<dbReference type="GO" id="GO:0034599">
    <property type="term" value="P:cellular response to oxidative stress"/>
    <property type="evidence" value="ECO:0007669"/>
    <property type="project" value="TreeGrafter"/>
</dbReference>
<dbReference type="Gene3D" id="1.10.3880.10">
    <property type="entry name" value="Fe(II) trafficking protein YggX"/>
    <property type="match status" value="1"/>
</dbReference>
<dbReference type="HAMAP" id="MF_00686">
    <property type="entry name" value="Fe_traffic_YggX"/>
    <property type="match status" value="1"/>
</dbReference>
<dbReference type="InterPro" id="IPR007457">
    <property type="entry name" value="Fe_traffick_prot_YggX"/>
</dbReference>
<dbReference type="InterPro" id="IPR036766">
    <property type="entry name" value="Fe_traffick_prot_YggX_sf"/>
</dbReference>
<dbReference type="NCBIfam" id="NF003817">
    <property type="entry name" value="PRK05408.1"/>
    <property type="match status" value="1"/>
</dbReference>
<dbReference type="PANTHER" id="PTHR36965">
    <property type="entry name" value="FE(2+)-TRAFFICKING PROTEIN-RELATED"/>
    <property type="match status" value="1"/>
</dbReference>
<dbReference type="PANTHER" id="PTHR36965:SF1">
    <property type="entry name" value="FE(2+)-TRAFFICKING PROTEIN-RELATED"/>
    <property type="match status" value="1"/>
</dbReference>
<dbReference type="Pfam" id="PF04362">
    <property type="entry name" value="Iron_traffic"/>
    <property type="match status" value="1"/>
</dbReference>
<dbReference type="PIRSF" id="PIRSF029827">
    <property type="entry name" value="Fe_traffic_YggX"/>
    <property type="match status" value="1"/>
</dbReference>
<dbReference type="SUPFAM" id="SSF111148">
    <property type="entry name" value="YggX-like"/>
    <property type="match status" value="1"/>
</dbReference>
<organism>
    <name type="scientific">Acinetobacter baumannii (strain SDF)</name>
    <dbReference type="NCBI Taxonomy" id="509170"/>
    <lineage>
        <taxon>Bacteria</taxon>
        <taxon>Pseudomonadati</taxon>
        <taxon>Pseudomonadota</taxon>
        <taxon>Gammaproteobacteria</taxon>
        <taxon>Moraxellales</taxon>
        <taxon>Moraxellaceae</taxon>
        <taxon>Acinetobacter</taxon>
        <taxon>Acinetobacter calcoaceticus/baumannii complex</taxon>
    </lineage>
</organism>
<keyword id="KW-0408">Iron</keyword>
<evidence type="ECO:0000255" key="1">
    <source>
        <dbReference type="HAMAP-Rule" id="MF_00686"/>
    </source>
</evidence>
<comment type="function">
    <text evidence="1">Could be a mediator in iron transactions between iron acquisition and iron-requiring processes, such as synthesis and/or repair of Fe-S clusters in biosynthetic enzymes.</text>
</comment>
<comment type="similarity">
    <text evidence="1">Belongs to the Fe(2+)-trafficking protein family.</text>
</comment>
<feature type="chain" id="PRO_1000131818" description="Probable Fe(2+)-trafficking protein">
    <location>
        <begin position="1"/>
        <end position="89"/>
    </location>
</feature>
<sequence length="89" mass="10750">MSRQVFCRKYQMEMEGLDFAPFPGAKGQEFFENVSKQAWQEWLQHQTTLINEKRLNVFEPEAKKFLEEQREKFFNNDESVEKAEGWKPE</sequence>
<name>FETP_ACIBS</name>
<reference key="1">
    <citation type="journal article" date="2008" name="PLoS ONE">
        <title>Comparative analysis of Acinetobacters: three genomes for three lifestyles.</title>
        <authorList>
            <person name="Vallenet D."/>
            <person name="Nordmann P."/>
            <person name="Barbe V."/>
            <person name="Poirel L."/>
            <person name="Mangenot S."/>
            <person name="Bataille E."/>
            <person name="Dossat C."/>
            <person name="Gas S."/>
            <person name="Kreimeyer A."/>
            <person name="Lenoble P."/>
            <person name="Oztas S."/>
            <person name="Poulain J."/>
            <person name="Segurens B."/>
            <person name="Robert C."/>
            <person name="Abergel C."/>
            <person name="Claverie J.-M."/>
            <person name="Raoult D."/>
            <person name="Medigue C."/>
            <person name="Weissenbach J."/>
            <person name="Cruveiller S."/>
        </authorList>
    </citation>
    <scope>NUCLEOTIDE SEQUENCE [LARGE SCALE GENOMIC DNA]</scope>
    <source>
        <strain>SDF</strain>
    </source>
</reference>